<protein>
    <recommendedName>
        <fullName>LIM and SH3 domain protein 1</fullName>
        <shortName>LASP-1</shortName>
    </recommendedName>
    <alternativeName>
        <fullName>Cysteine-rich peptide ZF-1</fullName>
    </alternativeName>
</protein>
<sequence>MNPNCARCGKIVYPTEKVNCLDKFWHKACF</sequence>
<name>LASP1_PIG</name>
<gene>
    <name type="primary">LASP1</name>
</gene>
<keyword id="KW-0002">3D-structure</keyword>
<keyword id="KW-0007">Acetylation</keyword>
<keyword id="KW-0009">Actin-binding</keyword>
<keyword id="KW-0963">Cytoplasm</keyword>
<keyword id="KW-0206">Cytoskeleton</keyword>
<keyword id="KW-0903">Direct protein sequencing</keyword>
<keyword id="KW-0406">Ion transport</keyword>
<keyword id="KW-0440">LIM domain</keyword>
<keyword id="KW-0479">Metal-binding</keyword>
<keyword id="KW-0597">Phosphoprotein</keyword>
<keyword id="KW-1185">Reference proteome</keyword>
<keyword id="KW-0677">Repeat</keyword>
<keyword id="KW-0813">Transport</keyword>
<keyword id="KW-0862">Zinc</keyword>
<accession>P80171</accession>
<organism>
    <name type="scientific">Sus scrofa</name>
    <name type="common">Pig</name>
    <dbReference type="NCBI Taxonomy" id="9823"/>
    <lineage>
        <taxon>Eukaryota</taxon>
        <taxon>Metazoa</taxon>
        <taxon>Chordata</taxon>
        <taxon>Craniata</taxon>
        <taxon>Vertebrata</taxon>
        <taxon>Euteleostomi</taxon>
        <taxon>Mammalia</taxon>
        <taxon>Eutheria</taxon>
        <taxon>Laurasiatheria</taxon>
        <taxon>Artiodactyla</taxon>
        <taxon>Suina</taxon>
        <taxon>Suidae</taxon>
        <taxon>Sus</taxon>
    </lineage>
</organism>
<proteinExistence type="evidence at protein level"/>
<comment type="function">
    <text evidence="1">Plays an important role in the regulation of dynamic actin-based, cytoskeletal activities. Agonist-dependent changes in LASP1 phosphorylation may also serve to regulate actin-associated ion transport activities, not only in the parietal cell but also in certain other F-actin-rich secretory epithelial cell types (By similarity).</text>
</comment>
<comment type="subunit">
    <text evidence="1">Interacts with F-actin (By similarity). Interacts with ANKRD54. Interacts with KBTBD10 (By similarity).</text>
</comment>
<comment type="subcellular location">
    <subcellularLocation>
        <location evidence="1">Cytoplasm</location>
        <location evidence="1">Cell cortex</location>
    </subcellularLocation>
    <subcellularLocation>
        <location evidence="1">Cytoplasm</location>
        <location evidence="1">Cytoskeleton</location>
    </subcellularLocation>
    <text evidence="1">Associated with the F-actin rich cortical cytoskeleton.</text>
</comment>
<comment type="PTM">
    <text evidence="1">Phosphorylated.</text>
</comment>
<reference key="1">
    <citation type="journal article" date="1993" name="Eur. J. Biochem.">
        <title>Chemical assay for cyst(e)ine-rich peptides detects a novel intestinal peptide ZF-1, homologous to a single zinc-finger motif.</title>
        <authorList>
            <person name="Sillard R."/>
            <person name="Joernvall H."/>
            <person name="Carlquist M."/>
            <person name="Mutt V."/>
        </authorList>
    </citation>
    <scope>PROTEIN SEQUENCE</scope>
    <scope>ACETYLATION AT MET-1</scope>
    <source>
        <tissue>Intestine</tissue>
    </source>
</reference>
<reference key="2">
    <citation type="journal article" date="1996" name="Biochemistry">
        <title>Solution structure of a naturally-occurring zinc-peptide complex demonstrates that the N-terminal zinc-binding module of the Lasp-1 LIM domain is an independent folding unit.</title>
        <authorList>
            <person name="Hammarstroem A."/>
            <person name="Berndt K.D."/>
            <person name="Sillard R."/>
            <person name="Adermann K."/>
            <person name="Otting G."/>
        </authorList>
    </citation>
    <scope>STRUCTURE BY NMR</scope>
</reference>
<feature type="chain" id="PRO_0000075763" description="LIM and SH3 domain protein 1">
    <location>
        <begin position="1"/>
        <end position="30" status="greater than"/>
    </location>
</feature>
<feature type="domain" description="LIM zinc-binding" evidence="2">
    <location>
        <begin position="5"/>
        <end position="30" status="greater than"/>
    </location>
</feature>
<feature type="modified residue" description="N-acetylmethionine" evidence="3">
    <location>
        <position position="1"/>
    </location>
</feature>
<feature type="non-terminal residue">
    <location>
        <position position="30"/>
    </location>
</feature>
<feature type="strand" evidence="4">
    <location>
        <begin position="6"/>
        <end position="8"/>
    </location>
</feature>
<feature type="helix" evidence="4">
    <location>
        <begin position="14"/>
        <end position="16"/>
    </location>
</feature>
<feature type="strand" evidence="4">
    <location>
        <begin position="20"/>
        <end position="23"/>
    </location>
</feature>
<feature type="helix" evidence="4">
    <location>
        <begin position="27"/>
        <end position="29"/>
    </location>
</feature>
<evidence type="ECO:0000250" key="1"/>
<evidence type="ECO:0000255" key="2">
    <source>
        <dbReference type="PROSITE-ProRule" id="PRU00125"/>
    </source>
</evidence>
<evidence type="ECO:0000269" key="3">
    <source>
    </source>
</evidence>
<evidence type="ECO:0007829" key="4">
    <source>
        <dbReference type="PDB" id="1ZFO"/>
    </source>
</evidence>
<dbReference type="PIR" id="S28849">
    <property type="entry name" value="S28849"/>
</dbReference>
<dbReference type="PDB" id="1ZFO">
    <property type="method" value="NMR"/>
    <property type="chains" value="A=1-30"/>
</dbReference>
<dbReference type="PDBsum" id="1ZFO"/>
<dbReference type="SMR" id="P80171"/>
<dbReference type="STRING" id="9823.ENSSSCP00000040384"/>
<dbReference type="iPTMnet" id="P80171"/>
<dbReference type="PeptideAtlas" id="P80171"/>
<dbReference type="InParanoid" id="P80171"/>
<dbReference type="EvolutionaryTrace" id="P80171"/>
<dbReference type="Proteomes" id="UP000008227">
    <property type="component" value="Unplaced"/>
</dbReference>
<dbReference type="Proteomes" id="UP000314985">
    <property type="component" value="Unplaced"/>
</dbReference>
<dbReference type="Proteomes" id="UP000694570">
    <property type="component" value="Unplaced"/>
</dbReference>
<dbReference type="Proteomes" id="UP000694571">
    <property type="component" value="Unplaced"/>
</dbReference>
<dbReference type="Proteomes" id="UP000694720">
    <property type="component" value="Unplaced"/>
</dbReference>
<dbReference type="Proteomes" id="UP000694722">
    <property type="component" value="Unplaced"/>
</dbReference>
<dbReference type="Proteomes" id="UP000694723">
    <property type="component" value="Unplaced"/>
</dbReference>
<dbReference type="Proteomes" id="UP000694724">
    <property type="component" value="Unplaced"/>
</dbReference>
<dbReference type="Proteomes" id="UP000694725">
    <property type="component" value="Unplaced"/>
</dbReference>
<dbReference type="Proteomes" id="UP000694726">
    <property type="component" value="Unplaced"/>
</dbReference>
<dbReference type="Proteomes" id="UP000694727">
    <property type="component" value="Unplaced"/>
</dbReference>
<dbReference type="Proteomes" id="UP000694728">
    <property type="component" value="Unplaced"/>
</dbReference>
<dbReference type="GO" id="GO:0030864">
    <property type="term" value="C:cortical actin cytoskeleton"/>
    <property type="evidence" value="ECO:0000250"/>
    <property type="project" value="UniProtKB"/>
</dbReference>
<dbReference type="GO" id="GO:0003779">
    <property type="term" value="F:actin binding"/>
    <property type="evidence" value="ECO:0007669"/>
    <property type="project" value="UniProtKB-KW"/>
</dbReference>
<dbReference type="GO" id="GO:0046872">
    <property type="term" value="F:metal ion binding"/>
    <property type="evidence" value="ECO:0007669"/>
    <property type="project" value="UniProtKB-KW"/>
</dbReference>
<dbReference type="GO" id="GO:0015075">
    <property type="term" value="F:monoatomic ion transmembrane transporter activity"/>
    <property type="evidence" value="ECO:0000250"/>
    <property type="project" value="UniProtKB"/>
</dbReference>
<dbReference type="GO" id="GO:0006811">
    <property type="term" value="P:monoatomic ion transport"/>
    <property type="evidence" value="ECO:0000250"/>
    <property type="project" value="UniProtKB"/>
</dbReference>
<dbReference type="Gene3D" id="2.10.110.10">
    <property type="entry name" value="Cysteine Rich Protein"/>
    <property type="match status" value="1"/>
</dbReference>
<dbReference type="InterPro" id="IPR051759">
    <property type="entry name" value="LIM-SH3_domain_protein"/>
</dbReference>
<dbReference type="InterPro" id="IPR001781">
    <property type="entry name" value="Znf_LIM"/>
</dbReference>
<dbReference type="PANTHER" id="PTHR46218">
    <property type="entry name" value="LASP"/>
    <property type="match status" value="1"/>
</dbReference>
<dbReference type="PANTHER" id="PTHR46218:SF2">
    <property type="entry name" value="LIM AND SH3 DOMAIN PROTEIN 1"/>
    <property type="match status" value="1"/>
</dbReference>
<dbReference type="Pfam" id="PF00412">
    <property type="entry name" value="LIM"/>
    <property type="match status" value="1"/>
</dbReference>
<dbReference type="SUPFAM" id="SSF57716">
    <property type="entry name" value="Glucocorticoid receptor-like (DNA-binding domain)"/>
    <property type="match status" value="1"/>
</dbReference>
<dbReference type="PROSITE" id="PS50023">
    <property type="entry name" value="LIM_DOMAIN_2"/>
    <property type="match status" value="1"/>
</dbReference>